<evidence type="ECO:0000255" key="1">
    <source>
        <dbReference type="HAMAP-Rule" id="MF_00014"/>
    </source>
</evidence>
<sequence>MEASRFIEIGLLTRPHGLKGEVCVDYYADSPFLLEGTVYLKAGRAAPRPVKVQSMRMHKGRPLVIFEGVNDRTAAELLRGHVMLVPEDTLPELDEDEVYLFELEGISVVIDESGEHLGVIERIDTDAYQEIWVIRTPQGKEVLFPAAAPFVLDIDLDSRTARIAPPPGLLDIYLSD</sequence>
<organism>
    <name type="scientific">Nitratidesulfovibrio vulgaris (strain ATCC 29579 / DSM 644 / CCUG 34227 / NCIMB 8303 / VKM B-1760 / Hildenborough)</name>
    <name type="common">Desulfovibrio vulgaris</name>
    <dbReference type="NCBI Taxonomy" id="882"/>
    <lineage>
        <taxon>Bacteria</taxon>
        <taxon>Pseudomonadati</taxon>
        <taxon>Thermodesulfobacteriota</taxon>
        <taxon>Desulfovibrionia</taxon>
        <taxon>Desulfovibrionales</taxon>
        <taxon>Desulfovibrionaceae</taxon>
        <taxon>Nitratidesulfovibrio</taxon>
    </lineage>
</organism>
<reference key="1">
    <citation type="journal article" date="2004" name="Nat. Biotechnol.">
        <title>The genome sequence of the anaerobic, sulfate-reducing bacterium Desulfovibrio vulgaris Hildenborough.</title>
        <authorList>
            <person name="Heidelberg J.F."/>
            <person name="Seshadri R."/>
            <person name="Haveman S.A."/>
            <person name="Hemme C.L."/>
            <person name="Paulsen I.T."/>
            <person name="Kolonay J.F."/>
            <person name="Eisen J.A."/>
            <person name="Ward N.L."/>
            <person name="Methe B.A."/>
            <person name="Brinkac L.M."/>
            <person name="Daugherty S.C."/>
            <person name="DeBoy R.T."/>
            <person name="Dodson R.J."/>
            <person name="Durkin A.S."/>
            <person name="Madupu R."/>
            <person name="Nelson W.C."/>
            <person name="Sullivan S.A."/>
            <person name="Fouts D.E."/>
            <person name="Haft D.H."/>
            <person name="Selengut J."/>
            <person name="Peterson J.D."/>
            <person name="Davidsen T.M."/>
            <person name="Zafar N."/>
            <person name="Zhou L."/>
            <person name="Radune D."/>
            <person name="Dimitrov G."/>
            <person name="Hance M."/>
            <person name="Tran K."/>
            <person name="Khouri H.M."/>
            <person name="Gill J."/>
            <person name="Utterback T.R."/>
            <person name="Feldblyum T.V."/>
            <person name="Wall J.D."/>
            <person name="Voordouw G."/>
            <person name="Fraser C.M."/>
        </authorList>
    </citation>
    <scope>NUCLEOTIDE SEQUENCE [LARGE SCALE GENOMIC DNA]</scope>
    <source>
        <strain>ATCC 29579 / DSM 644 / CCUG 34227 / NCIMB 8303 / VKM B-1760 / Hildenborough</strain>
    </source>
</reference>
<comment type="function">
    <text evidence="1">An accessory protein needed during the final step in the assembly of 30S ribosomal subunit, possibly for assembly of the head region. Essential for efficient processing of 16S rRNA. May be needed both before and after RbfA during the maturation of 16S rRNA. It has affinity for free ribosomal 30S subunits but not for 70S ribosomes.</text>
</comment>
<comment type="subunit">
    <text evidence="1">Binds ribosomal protein uS19.</text>
</comment>
<comment type="subcellular location">
    <subcellularLocation>
        <location evidence="1">Cytoplasm</location>
    </subcellularLocation>
</comment>
<comment type="domain">
    <text evidence="1">The PRC barrel domain binds ribosomal protein uS19.</text>
</comment>
<comment type="similarity">
    <text evidence="1">Belongs to the RimM family.</text>
</comment>
<dbReference type="EMBL" id="AE017285">
    <property type="protein sequence ID" value="AAS95317.1"/>
    <property type="molecule type" value="Genomic_DNA"/>
</dbReference>
<dbReference type="RefSeq" id="WP_010938138.1">
    <property type="nucleotide sequence ID" value="NC_002937.3"/>
</dbReference>
<dbReference type="RefSeq" id="YP_010058.1">
    <property type="nucleotide sequence ID" value="NC_002937.3"/>
</dbReference>
<dbReference type="SMR" id="Q72DU2"/>
<dbReference type="STRING" id="882.DVU_0837"/>
<dbReference type="PaxDb" id="882-DVU_0837"/>
<dbReference type="EnsemblBacteria" id="AAS95317">
    <property type="protein sequence ID" value="AAS95317"/>
    <property type="gene ID" value="DVU_0837"/>
</dbReference>
<dbReference type="KEGG" id="dvu:DVU_0837"/>
<dbReference type="PATRIC" id="fig|882.5.peg.783"/>
<dbReference type="eggNOG" id="COG0806">
    <property type="taxonomic scope" value="Bacteria"/>
</dbReference>
<dbReference type="HOGENOM" id="CLU_077636_0_0_7"/>
<dbReference type="OrthoDB" id="5381335at2"/>
<dbReference type="PhylomeDB" id="Q72DU2"/>
<dbReference type="Proteomes" id="UP000002194">
    <property type="component" value="Chromosome"/>
</dbReference>
<dbReference type="GO" id="GO:0005737">
    <property type="term" value="C:cytoplasm"/>
    <property type="evidence" value="ECO:0007669"/>
    <property type="project" value="UniProtKB-SubCell"/>
</dbReference>
<dbReference type="GO" id="GO:0005840">
    <property type="term" value="C:ribosome"/>
    <property type="evidence" value="ECO:0007669"/>
    <property type="project" value="InterPro"/>
</dbReference>
<dbReference type="GO" id="GO:0043022">
    <property type="term" value="F:ribosome binding"/>
    <property type="evidence" value="ECO:0007669"/>
    <property type="project" value="InterPro"/>
</dbReference>
<dbReference type="GO" id="GO:0042274">
    <property type="term" value="P:ribosomal small subunit biogenesis"/>
    <property type="evidence" value="ECO:0007669"/>
    <property type="project" value="UniProtKB-UniRule"/>
</dbReference>
<dbReference type="GO" id="GO:0006364">
    <property type="term" value="P:rRNA processing"/>
    <property type="evidence" value="ECO:0007669"/>
    <property type="project" value="UniProtKB-UniRule"/>
</dbReference>
<dbReference type="Gene3D" id="2.30.30.240">
    <property type="entry name" value="PRC-barrel domain"/>
    <property type="match status" value="1"/>
</dbReference>
<dbReference type="Gene3D" id="2.40.30.60">
    <property type="entry name" value="RimM"/>
    <property type="match status" value="1"/>
</dbReference>
<dbReference type="HAMAP" id="MF_00014">
    <property type="entry name" value="Ribosome_mat_RimM"/>
    <property type="match status" value="1"/>
</dbReference>
<dbReference type="InterPro" id="IPR011033">
    <property type="entry name" value="PRC_barrel-like_sf"/>
</dbReference>
<dbReference type="InterPro" id="IPR056792">
    <property type="entry name" value="PRC_RimM"/>
</dbReference>
<dbReference type="InterPro" id="IPR011961">
    <property type="entry name" value="RimM"/>
</dbReference>
<dbReference type="InterPro" id="IPR002676">
    <property type="entry name" value="RimM_N"/>
</dbReference>
<dbReference type="InterPro" id="IPR036976">
    <property type="entry name" value="RimM_N_sf"/>
</dbReference>
<dbReference type="InterPro" id="IPR009000">
    <property type="entry name" value="Transl_B-barrel_sf"/>
</dbReference>
<dbReference type="NCBIfam" id="TIGR02273">
    <property type="entry name" value="16S_RimM"/>
    <property type="match status" value="1"/>
</dbReference>
<dbReference type="PANTHER" id="PTHR33692">
    <property type="entry name" value="RIBOSOME MATURATION FACTOR RIMM"/>
    <property type="match status" value="1"/>
</dbReference>
<dbReference type="PANTHER" id="PTHR33692:SF1">
    <property type="entry name" value="RIBOSOME MATURATION FACTOR RIMM"/>
    <property type="match status" value="1"/>
</dbReference>
<dbReference type="Pfam" id="PF24986">
    <property type="entry name" value="PRC_RimM"/>
    <property type="match status" value="1"/>
</dbReference>
<dbReference type="Pfam" id="PF01782">
    <property type="entry name" value="RimM"/>
    <property type="match status" value="1"/>
</dbReference>
<dbReference type="SUPFAM" id="SSF50346">
    <property type="entry name" value="PRC-barrel domain"/>
    <property type="match status" value="1"/>
</dbReference>
<dbReference type="SUPFAM" id="SSF50447">
    <property type="entry name" value="Translation proteins"/>
    <property type="match status" value="1"/>
</dbReference>
<name>RIMM_NITV2</name>
<keyword id="KW-0143">Chaperone</keyword>
<keyword id="KW-0963">Cytoplasm</keyword>
<keyword id="KW-1185">Reference proteome</keyword>
<keyword id="KW-0690">Ribosome biogenesis</keyword>
<keyword id="KW-0698">rRNA processing</keyword>
<proteinExistence type="inferred from homology"/>
<feature type="chain" id="PRO_0000163285" description="Ribosome maturation factor RimM">
    <location>
        <begin position="1"/>
        <end position="176"/>
    </location>
</feature>
<feature type="domain" description="PRC barrel" evidence="1">
    <location>
        <begin position="95"/>
        <end position="169"/>
    </location>
</feature>
<gene>
    <name evidence="1" type="primary">rimM</name>
    <name type="ordered locus">DVU_0837</name>
</gene>
<protein>
    <recommendedName>
        <fullName evidence="1">Ribosome maturation factor RimM</fullName>
    </recommendedName>
</protein>
<accession>Q72DU2</accession>